<proteinExistence type="evidence at protein level"/>
<organism>
    <name type="scientific">Escherichia coli (strain K12)</name>
    <dbReference type="NCBI Taxonomy" id="83333"/>
    <lineage>
        <taxon>Bacteria</taxon>
        <taxon>Pseudomonadati</taxon>
        <taxon>Pseudomonadota</taxon>
        <taxon>Gammaproteobacteria</taxon>
        <taxon>Enterobacterales</taxon>
        <taxon>Enterobacteriaceae</taxon>
        <taxon>Escherichia</taxon>
    </lineage>
</organism>
<protein>
    <recommendedName>
        <fullName>Uncharacterized sugar kinase YdjH</fullName>
        <ecNumber>2.7.1.-</ecNumber>
    </recommendedName>
</protein>
<reference key="1">
    <citation type="journal article" date="1996" name="DNA Res.">
        <title>A 570-kb DNA sequence of the Escherichia coli K-12 genome corresponding to the 28.0-40.1 min region on the linkage map.</title>
        <authorList>
            <person name="Aiba H."/>
            <person name="Baba T."/>
            <person name="Fujita K."/>
            <person name="Hayashi K."/>
            <person name="Inada T."/>
            <person name="Isono K."/>
            <person name="Itoh T."/>
            <person name="Kasai H."/>
            <person name="Kashimoto K."/>
            <person name="Kimura S."/>
            <person name="Kitakawa M."/>
            <person name="Kitagawa M."/>
            <person name="Makino K."/>
            <person name="Miki T."/>
            <person name="Mizobuchi K."/>
            <person name="Mori H."/>
            <person name="Mori T."/>
            <person name="Motomura K."/>
            <person name="Nakade S."/>
            <person name="Nakamura Y."/>
            <person name="Nashimoto H."/>
            <person name="Nishio Y."/>
            <person name="Oshima T."/>
            <person name="Saito N."/>
            <person name="Sampei G."/>
            <person name="Seki Y."/>
            <person name="Sivasundaram S."/>
            <person name="Tagami H."/>
            <person name="Takeda J."/>
            <person name="Takemoto K."/>
            <person name="Takeuchi Y."/>
            <person name="Wada C."/>
            <person name="Yamamoto Y."/>
            <person name="Horiuchi T."/>
        </authorList>
    </citation>
    <scope>NUCLEOTIDE SEQUENCE [LARGE SCALE GENOMIC DNA]</scope>
    <source>
        <strain>K12 / W3110 / ATCC 27325 / DSM 5911</strain>
    </source>
</reference>
<reference key="2">
    <citation type="journal article" date="1997" name="Science">
        <title>The complete genome sequence of Escherichia coli K-12.</title>
        <authorList>
            <person name="Blattner F.R."/>
            <person name="Plunkett G. III"/>
            <person name="Bloch C.A."/>
            <person name="Perna N.T."/>
            <person name="Burland V."/>
            <person name="Riley M."/>
            <person name="Collado-Vides J."/>
            <person name="Glasner J.D."/>
            <person name="Rode C.K."/>
            <person name="Mayhew G.F."/>
            <person name="Gregor J."/>
            <person name="Davis N.W."/>
            <person name="Kirkpatrick H.A."/>
            <person name="Goeden M.A."/>
            <person name="Rose D.J."/>
            <person name="Mau B."/>
            <person name="Shao Y."/>
        </authorList>
    </citation>
    <scope>NUCLEOTIDE SEQUENCE [LARGE SCALE GENOMIC DNA]</scope>
    <source>
        <strain>K12 / MG1655 / ATCC 47076</strain>
    </source>
</reference>
<reference key="3">
    <citation type="journal article" date="2006" name="Mol. Syst. Biol.">
        <title>Highly accurate genome sequences of Escherichia coli K-12 strains MG1655 and W3110.</title>
        <authorList>
            <person name="Hayashi K."/>
            <person name="Morooka N."/>
            <person name="Yamamoto Y."/>
            <person name="Fujita K."/>
            <person name="Isono K."/>
            <person name="Choi S."/>
            <person name="Ohtsubo E."/>
            <person name="Baba T."/>
            <person name="Wanner B.L."/>
            <person name="Mori H."/>
            <person name="Horiuchi T."/>
        </authorList>
    </citation>
    <scope>NUCLEOTIDE SEQUENCE [LARGE SCALE GENOMIC DNA]</scope>
    <source>
        <strain>K12 / W3110 / ATCC 27325 / DSM 5911</strain>
    </source>
</reference>
<sequence>MDNLDVICIGAAIVDIPLQPVSKNIFDVDSYPLERIAMTTGGDAINEATIISRLGHRTALMSRIGKDAAGQFILDHCRKENIDIQSLKQDVSIDTSINVGLVTEDGERTFVTNRNGSLWKLNIDDVDFARFSQAKLLSLASIFNSPLLDGKALTEIFTQAKARQMIICADMIKPRLNETLDDICEALSYVDYLFPNFAEAKLLTGKETLDEIADCFLACGVKTVVIKTGKDGCFIKRGDMTMKVPAVAGITAIDTIGAGDNFASGFIAALLEGKNLRECARFANATAAISVLSVGATTGVKNRKLVEQLLEEYEG</sequence>
<evidence type="ECO:0000305" key="1"/>
<evidence type="ECO:0007829" key="2">
    <source>
        <dbReference type="PDB" id="3H49"/>
    </source>
</evidence>
<evidence type="ECO:0007829" key="3">
    <source>
        <dbReference type="PDB" id="3IN1"/>
    </source>
</evidence>
<accession>P77493</accession>
<comment type="similarity">
    <text evidence="1">Belongs to the carbohydrate kinase PfkB family.</text>
</comment>
<feature type="chain" id="PRO_0000080145" description="Uncharacterized sugar kinase YdjH">
    <location>
        <begin position="1"/>
        <end position="315"/>
    </location>
</feature>
<feature type="strand" evidence="2">
    <location>
        <begin position="4"/>
        <end position="10"/>
    </location>
</feature>
<feature type="strand" evidence="2">
    <location>
        <begin position="13"/>
        <end position="18"/>
    </location>
</feature>
<feature type="helix" evidence="2">
    <location>
        <begin position="23"/>
        <end position="27"/>
    </location>
</feature>
<feature type="strand" evidence="2">
    <location>
        <begin position="39"/>
        <end position="42"/>
    </location>
</feature>
<feature type="helix" evidence="2">
    <location>
        <begin position="43"/>
        <end position="53"/>
    </location>
</feature>
<feature type="strand" evidence="2">
    <location>
        <begin position="57"/>
        <end position="61"/>
    </location>
</feature>
<feature type="strand" evidence="2">
    <location>
        <begin position="63"/>
        <end position="67"/>
    </location>
</feature>
<feature type="helix" evidence="2">
    <location>
        <begin position="68"/>
        <end position="80"/>
    </location>
</feature>
<feature type="strand" evidence="2">
    <location>
        <begin position="88"/>
        <end position="90"/>
    </location>
</feature>
<feature type="strand" evidence="2">
    <location>
        <begin position="97"/>
        <end position="102"/>
    </location>
</feature>
<feature type="strand" evidence="2">
    <location>
        <begin position="108"/>
        <end position="111"/>
    </location>
</feature>
<feature type="helix" evidence="2">
    <location>
        <begin position="117"/>
        <end position="120"/>
    </location>
</feature>
<feature type="helix" evidence="2">
    <location>
        <begin position="123"/>
        <end position="125"/>
    </location>
</feature>
<feature type="helix" evidence="2">
    <location>
        <begin position="128"/>
        <end position="133"/>
    </location>
</feature>
<feature type="strand" evidence="2">
    <location>
        <begin position="135"/>
        <end position="142"/>
    </location>
</feature>
<feature type="helix" evidence="2">
    <location>
        <begin position="150"/>
        <end position="162"/>
    </location>
</feature>
<feature type="strand" evidence="2">
    <location>
        <begin position="166"/>
        <end position="171"/>
    </location>
</feature>
<feature type="strand" evidence="3">
    <location>
        <begin position="175"/>
        <end position="177"/>
    </location>
</feature>
<feature type="helix" evidence="2">
    <location>
        <begin position="180"/>
        <end position="187"/>
    </location>
</feature>
<feature type="strand" evidence="2">
    <location>
        <begin position="191"/>
        <end position="194"/>
    </location>
</feature>
<feature type="helix" evidence="2">
    <location>
        <begin position="197"/>
        <end position="204"/>
    </location>
</feature>
<feature type="helix" evidence="2">
    <location>
        <begin position="209"/>
        <end position="217"/>
    </location>
</feature>
<feature type="turn" evidence="2">
    <location>
        <begin position="218"/>
        <end position="220"/>
    </location>
</feature>
<feature type="strand" evidence="2">
    <location>
        <begin position="222"/>
        <end position="227"/>
    </location>
</feature>
<feature type="helix" evidence="3">
    <location>
        <begin position="229"/>
        <end position="231"/>
    </location>
</feature>
<feature type="strand" evidence="2">
    <location>
        <begin position="233"/>
        <end position="237"/>
    </location>
</feature>
<feature type="strand" evidence="2">
    <location>
        <begin position="240"/>
        <end position="244"/>
    </location>
</feature>
<feature type="helix" evidence="2">
    <location>
        <begin position="258"/>
        <end position="271"/>
    </location>
</feature>
<feature type="helix" evidence="2">
    <location>
        <begin position="276"/>
        <end position="291"/>
    </location>
</feature>
<feature type="strand" evidence="2">
    <location>
        <begin position="293"/>
        <end position="299"/>
    </location>
</feature>
<feature type="strand" evidence="2">
    <location>
        <begin position="301"/>
        <end position="303"/>
    </location>
</feature>
<feature type="helix" evidence="2">
    <location>
        <begin position="304"/>
        <end position="307"/>
    </location>
</feature>
<dbReference type="EC" id="2.7.1.-"/>
<dbReference type="EMBL" id="U00096">
    <property type="protein sequence ID" value="AAC74842.2"/>
    <property type="molecule type" value="Genomic_DNA"/>
</dbReference>
<dbReference type="EMBL" id="AP009048">
    <property type="protein sequence ID" value="BAA15563.2"/>
    <property type="molecule type" value="Genomic_DNA"/>
</dbReference>
<dbReference type="PIR" id="D64937">
    <property type="entry name" value="D64937"/>
</dbReference>
<dbReference type="RefSeq" id="NP_416286.4">
    <property type="nucleotide sequence ID" value="NC_000913.3"/>
</dbReference>
<dbReference type="RefSeq" id="WP_000369231.1">
    <property type="nucleotide sequence ID" value="NZ_SSZK01000001.1"/>
</dbReference>
<dbReference type="PDB" id="3H49">
    <property type="method" value="X-ray"/>
    <property type="resolution" value="1.80 A"/>
    <property type="chains" value="A/B=2-315"/>
</dbReference>
<dbReference type="PDB" id="3IN1">
    <property type="method" value="X-ray"/>
    <property type="resolution" value="2.15 A"/>
    <property type="chains" value="A/B=2-315"/>
</dbReference>
<dbReference type="PDBsum" id="3H49"/>
<dbReference type="PDBsum" id="3IN1"/>
<dbReference type="SMR" id="P77493"/>
<dbReference type="BioGRID" id="4259545">
    <property type="interactions" value="104"/>
</dbReference>
<dbReference type="BioGRID" id="850642">
    <property type="interactions" value="2"/>
</dbReference>
<dbReference type="FunCoup" id="P77493">
    <property type="interactions" value="116"/>
</dbReference>
<dbReference type="IntAct" id="P77493">
    <property type="interactions" value="2"/>
</dbReference>
<dbReference type="STRING" id="511145.b1772"/>
<dbReference type="PaxDb" id="511145-b1772"/>
<dbReference type="DNASU" id="946285"/>
<dbReference type="EnsemblBacteria" id="AAC74842">
    <property type="protein sequence ID" value="AAC74842"/>
    <property type="gene ID" value="b1772"/>
</dbReference>
<dbReference type="GeneID" id="946285"/>
<dbReference type="KEGG" id="ecj:JW5289"/>
<dbReference type="KEGG" id="eco:b1772"/>
<dbReference type="KEGG" id="ecoc:C3026_10115"/>
<dbReference type="PATRIC" id="fig|1411691.4.peg.482"/>
<dbReference type="EchoBASE" id="EB3257"/>
<dbReference type="eggNOG" id="COG0524">
    <property type="taxonomic scope" value="Bacteria"/>
</dbReference>
<dbReference type="HOGENOM" id="CLU_027634_6_0_6"/>
<dbReference type="InParanoid" id="P77493"/>
<dbReference type="OMA" id="LIICADM"/>
<dbReference type="OrthoDB" id="9795789at2"/>
<dbReference type="PhylomeDB" id="P77493"/>
<dbReference type="BioCyc" id="EcoCyc:G6959-MONOMER"/>
<dbReference type="BioCyc" id="MetaCyc:G6959-MONOMER"/>
<dbReference type="STRENDA-DB" id="9S3ZPQ">
    <property type="experiment" value="Charcterization of YdjH"/>
</dbReference>
<dbReference type="EvolutionaryTrace" id="P77493"/>
<dbReference type="PRO" id="PR:P77493"/>
<dbReference type="Proteomes" id="UP000000625">
    <property type="component" value="Chromosome"/>
</dbReference>
<dbReference type="GO" id="GO:0005829">
    <property type="term" value="C:cytosol"/>
    <property type="evidence" value="ECO:0000318"/>
    <property type="project" value="GO_Central"/>
</dbReference>
<dbReference type="GO" id="GO:0008673">
    <property type="term" value="F:2-dehydro-3-deoxygluconokinase activity"/>
    <property type="evidence" value="ECO:0000318"/>
    <property type="project" value="GO_Central"/>
</dbReference>
<dbReference type="GO" id="GO:0019200">
    <property type="term" value="F:carbohydrate kinase activity"/>
    <property type="evidence" value="ECO:0000314"/>
    <property type="project" value="EcoCyc"/>
</dbReference>
<dbReference type="GO" id="GO:0042803">
    <property type="term" value="F:protein homodimerization activity"/>
    <property type="evidence" value="ECO:0000314"/>
    <property type="project" value="EcoCyc"/>
</dbReference>
<dbReference type="GO" id="GO:0019698">
    <property type="term" value="P:D-galacturonate catabolic process"/>
    <property type="evidence" value="ECO:0000318"/>
    <property type="project" value="GO_Central"/>
</dbReference>
<dbReference type="GO" id="GO:0042840">
    <property type="term" value="P:D-glucuronate catabolic process"/>
    <property type="evidence" value="ECO:0000318"/>
    <property type="project" value="GO_Central"/>
</dbReference>
<dbReference type="GO" id="GO:0006974">
    <property type="term" value="P:DNA damage response"/>
    <property type="evidence" value="ECO:0000318"/>
    <property type="project" value="GO_Central"/>
</dbReference>
<dbReference type="CDD" id="cd01166">
    <property type="entry name" value="KdgK"/>
    <property type="match status" value="1"/>
</dbReference>
<dbReference type="Gene3D" id="3.40.1190.20">
    <property type="match status" value="1"/>
</dbReference>
<dbReference type="InterPro" id="IPR002173">
    <property type="entry name" value="Carboh/pur_kinase_PfkB_CS"/>
</dbReference>
<dbReference type="InterPro" id="IPR011611">
    <property type="entry name" value="PfkB_dom"/>
</dbReference>
<dbReference type="InterPro" id="IPR002139">
    <property type="entry name" value="Ribo/fructo_kinase"/>
</dbReference>
<dbReference type="InterPro" id="IPR029056">
    <property type="entry name" value="Ribokinase-like"/>
</dbReference>
<dbReference type="PANTHER" id="PTHR10584:SF166">
    <property type="entry name" value="RIBOKINASE"/>
    <property type="match status" value="1"/>
</dbReference>
<dbReference type="PANTHER" id="PTHR10584">
    <property type="entry name" value="SUGAR KINASE"/>
    <property type="match status" value="1"/>
</dbReference>
<dbReference type="Pfam" id="PF00294">
    <property type="entry name" value="PfkB"/>
    <property type="match status" value="1"/>
</dbReference>
<dbReference type="PRINTS" id="PR00990">
    <property type="entry name" value="RIBOKINASE"/>
</dbReference>
<dbReference type="SUPFAM" id="SSF53613">
    <property type="entry name" value="Ribokinase-like"/>
    <property type="match status" value="1"/>
</dbReference>
<dbReference type="PROSITE" id="PS00583">
    <property type="entry name" value="PFKB_KINASES_1"/>
    <property type="match status" value="1"/>
</dbReference>
<dbReference type="PROSITE" id="PS00584">
    <property type="entry name" value="PFKB_KINASES_2"/>
    <property type="match status" value="1"/>
</dbReference>
<keyword id="KW-0002">3D-structure</keyword>
<keyword id="KW-0418">Kinase</keyword>
<keyword id="KW-1185">Reference proteome</keyword>
<keyword id="KW-0808">Transferase</keyword>
<gene>
    <name type="primary">ydjH</name>
    <name type="ordered locus">b1772</name>
    <name type="ordered locus">JW5289</name>
</gene>
<name>YDJH_ECOLI</name>